<proteinExistence type="inferred from homology"/>
<feature type="chain" id="PRO_1000092024" description="5'-nucleotidase SurE">
    <location>
        <begin position="1"/>
        <end position="256"/>
    </location>
</feature>
<feature type="binding site" evidence="1">
    <location>
        <position position="13"/>
    </location>
    <ligand>
        <name>a divalent metal cation</name>
        <dbReference type="ChEBI" id="CHEBI:60240"/>
    </ligand>
</feature>
<feature type="binding site" evidence="1">
    <location>
        <position position="14"/>
    </location>
    <ligand>
        <name>a divalent metal cation</name>
        <dbReference type="ChEBI" id="CHEBI:60240"/>
    </ligand>
</feature>
<feature type="binding site" evidence="1">
    <location>
        <position position="44"/>
    </location>
    <ligand>
        <name>a divalent metal cation</name>
        <dbReference type="ChEBI" id="CHEBI:60240"/>
    </ligand>
</feature>
<feature type="binding site" evidence="1">
    <location>
        <position position="101"/>
    </location>
    <ligand>
        <name>a divalent metal cation</name>
        <dbReference type="ChEBI" id="CHEBI:60240"/>
    </ligand>
</feature>
<dbReference type="EC" id="3.1.3.5" evidence="1"/>
<dbReference type="EMBL" id="AP009380">
    <property type="protein sequence ID" value="BAG32726.1"/>
    <property type="molecule type" value="Genomic_DNA"/>
</dbReference>
<dbReference type="RefSeq" id="WP_004583692.1">
    <property type="nucleotide sequence ID" value="NZ_CP025930.1"/>
</dbReference>
<dbReference type="SMR" id="B2RH81"/>
<dbReference type="GeneID" id="29255453"/>
<dbReference type="KEGG" id="pgn:PGN_0207"/>
<dbReference type="eggNOG" id="COG0496">
    <property type="taxonomic scope" value="Bacteria"/>
</dbReference>
<dbReference type="HOGENOM" id="CLU_045192_1_0_10"/>
<dbReference type="OrthoDB" id="9780815at2"/>
<dbReference type="BioCyc" id="PGIN431947:G1G2V-226-MONOMER"/>
<dbReference type="Proteomes" id="UP000008842">
    <property type="component" value="Chromosome"/>
</dbReference>
<dbReference type="GO" id="GO:0005737">
    <property type="term" value="C:cytoplasm"/>
    <property type="evidence" value="ECO:0007669"/>
    <property type="project" value="UniProtKB-SubCell"/>
</dbReference>
<dbReference type="GO" id="GO:0008254">
    <property type="term" value="F:3'-nucleotidase activity"/>
    <property type="evidence" value="ECO:0007669"/>
    <property type="project" value="TreeGrafter"/>
</dbReference>
<dbReference type="GO" id="GO:0008253">
    <property type="term" value="F:5'-nucleotidase activity"/>
    <property type="evidence" value="ECO:0007669"/>
    <property type="project" value="UniProtKB-UniRule"/>
</dbReference>
<dbReference type="GO" id="GO:0004309">
    <property type="term" value="F:exopolyphosphatase activity"/>
    <property type="evidence" value="ECO:0007669"/>
    <property type="project" value="TreeGrafter"/>
</dbReference>
<dbReference type="GO" id="GO:0046872">
    <property type="term" value="F:metal ion binding"/>
    <property type="evidence" value="ECO:0007669"/>
    <property type="project" value="UniProtKB-UniRule"/>
</dbReference>
<dbReference type="GO" id="GO:0000166">
    <property type="term" value="F:nucleotide binding"/>
    <property type="evidence" value="ECO:0007669"/>
    <property type="project" value="UniProtKB-KW"/>
</dbReference>
<dbReference type="Gene3D" id="3.40.1210.10">
    <property type="entry name" value="Survival protein SurE-like phosphatase/nucleotidase"/>
    <property type="match status" value="1"/>
</dbReference>
<dbReference type="HAMAP" id="MF_00060">
    <property type="entry name" value="SurE"/>
    <property type="match status" value="1"/>
</dbReference>
<dbReference type="InterPro" id="IPR030048">
    <property type="entry name" value="SurE"/>
</dbReference>
<dbReference type="InterPro" id="IPR002828">
    <property type="entry name" value="SurE-like_Pase/nucleotidase"/>
</dbReference>
<dbReference type="InterPro" id="IPR036523">
    <property type="entry name" value="SurE-like_sf"/>
</dbReference>
<dbReference type="NCBIfam" id="TIGR00087">
    <property type="entry name" value="surE"/>
    <property type="match status" value="1"/>
</dbReference>
<dbReference type="PANTHER" id="PTHR30457">
    <property type="entry name" value="5'-NUCLEOTIDASE SURE"/>
    <property type="match status" value="1"/>
</dbReference>
<dbReference type="PANTHER" id="PTHR30457:SF12">
    <property type="entry name" value="5'_3'-NUCLEOTIDASE SURE"/>
    <property type="match status" value="1"/>
</dbReference>
<dbReference type="Pfam" id="PF01975">
    <property type="entry name" value="SurE"/>
    <property type="match status" value="1"/>
</dbReference>
<dbReference type="SUPFAM" id="SSF64167">
    <property type="entry name" value="SurE-like"/>
    <property type="match status" value="1"/>
</dbReference>
<reference key="1">
    <citation type="journal article" date="2008" name="DNA Res.">
        <title>Determination of the genome sequence of Porphyromonas gingivalis strain ATCC 33277 and genomic comparison with strain W83 revealed extensive genome rearrangements in P. gingivalis.</title>
        <authorList>
            <person name="Naito M."/>
            <person name="Hirakawa H."/>
            <person name="Yamashita A."/>
            <person name="Ohara N."/>
            <person name="Shoji M."/>
            <person name="Yukitake H."/>
            <person name="Nakayama K."/>
            <person name="Toh H."/>
            <person name="Yoshimura F."/>
            <person name="Kuhara S."/>
            <person name="Hattori M."/>
            <person name="Hayashi T."/>
            <person name="Nakayama K."/>
        </authorList>
    </citation>
    <scope>NUCLEOTIDE SEQUENCE [LARGE SCALE GENOMIC DNA]</scope>
    <source>
        <strain>ATCC 33277 / DSM 20709 / CIP 103683 / JCM 12257 / NCTC 11834 / 2561</strain>
    </source>
</reference>
<name>SURE_PORG3</name>
<accession>B2RH81</accession>
<gene>
    <name evidence="1" type="primary">surE</name>
    <name type="ordered locus">PGN_0207</name>
</gene>
<protein>
    <recommendedName>
        <fullName evidence="1">5'-nucleotidase SurE</fullName>
        <ecNumber evidence="1">3.1.3.5</ecNumber>
    </recommendedName>
    <alternativeName>
        <fullName evidence="1">Nucleoside 5'-monophosphate phosphohydrolase</fullName>
    </alternativeName>
</protein>
<organism>
    <name type="scientific">Porphyromonas gingivalis (strain ATCC 33277 / DSM 20709 / CIP 103683 / JCM 12257 / NCTC 11834 / 2561)</name>
    <dbReference type="NCBI Taxonomy" id="431947"/>
    <lineage>
        <taxon>Bacteria</taxon>
        <taxon>Pseudomonadati</taxon>
        <taxon>Bacteroidota</taxon>
        <taxon>Bacteroidia</taxon>
        <taxon>Bacteroidales</taxon>
        <taxon>Porphyromonadaceae</taxon>
        <taxon>Porphyromonas</taxon>
    </lineage>
</organism>
<keyword id="KW-0963">Cytoplasm</keyword>
<keyword id="KW-0378">Hydrolase</keyword>
<keyword id="KW-0479">Metal-binding</keyword>
<keyword id="KW-0547">Nucleotide-binding</keyword>
<evidence type="ECO:0000255" key="1">
    <source>
        <dbReference type="HAMAP-Rule" id="MF_00060"/>
    </source>
</evidence>
<sequence>MKADPIEILVSNDDGFRAQGIRELAEALRPLGNVTIVAPDGPRSGASAAITSTLPIKLKLRHREEGYTVYSCTGTPVDCVKLAMNTVFKERKPDLLVTGVNHGNNAGICVIYSGTVGAAMEGCVCDVPALAVSLDDHSEICDMSHATAYAVHVSRMILKNGLPQDTMLSMNVPKGKPLGLKPCAVTDGRFVDEYMASEDARGNAVYWMTGRQINKGTIEGDLELMHAGYVTLSPIKLNMTSRRYLPVLEELLKRSV</sequence>
<comment type="function">
    <text evidence="1">Nucleotidase that shows phosphatase activity on nucleoside 5'-monophosphates.</text>
</comment>
<comment type="catalytic activity">
    <reaction evidence="1">
        <text>a ribonucleoside 5'-phosphate + H2O = a ribonucleoside + phosphate</text>
        <dbReference type="Rhea" id="RHEA:12484"/>
        <dbReference type="ChEBI" id="CHEBI:15377"/>
        <dbReference type="ChEBI" id="CHEBI:18254"/>
        <dbReference type="ChEBI" id="CHEBI:43474"/>
        <dbReference type="ChEBI" id="CHEBI:58043"/>
        <dbReference type="EC" id="3.1.3.5"/>
    </reaction>
</comment>
<comment type="cofactor">
    <cofactor evidence="1">
        <name>a divalent metal cation</name>
        <dbReference type="ChEBI" id="CHEBI:60240"/>
    </cofactor>
    <text evidence="1">Binds 1 divalent metal cation per subunit.</text>
</comment>
<comment type="subcellular location">
    <subcellularLocation>
        <location evidence="1">Cytoplasm</location>
    </subcellularLocation>
</comment>
<comment type="similarity">
    <text evidence="1">Belongs to the SurE nucleotidase family.</text>
</comment>